<proteinExistence type="predicted"/>
<gene>
    <name type="ORF">DDB_G0283395</name>
</gene>
<organism>
    <name type="scientific">Dictyostelium discoideum</name>
    <name type="common">Social amoeba</name>
    <dbReference type="NCBI Taxonomy" id="44689"/>
    <lineage>
        <taxon>Eukaryota</taxon>
        <taxon>Amoebozoa</taxon>
        <taxon>Evosea</taxon>
        <taxon>Eumycetozoa</taxon>
        <taxon>Dictyostelia</taxon>
        <taxon>Dictyosteliales</taxon>
        <taxon>Dictyosteliaceae</taxon>
        <taxon>Dictyostelium</taxon>
    </lineage>
</organism>
<accession>Q54R59</accession>
<reference key="1">
    <citation type="journal article" date="2005" name="Nature">
        <title>The genome of the social amoeba Dictyostelium discoideum.</title>
        <authorList>
            <person name="Eichinger L."/>
            <person name="Pachebat J.A."/>
            <person name="Gloeckner G."/>
            <person name="Rajandream M.A."/>
            <person name="Sucgang R."/>
            <person name="Berriman M."/>
            <person name="Song J."/>
            <person name="Olsen R."/>
            <person name="Szafranski K."/>
            <person name="Xu Q."/>
            <person name="Tunggal B."/>
            <person name="Kummerfeld S."/>
            <person name="Madera M."/>
            <person name="Konfortov B.A."/>
            <person name="Rivero F."/>
            <person name="Bankier A.T."/>
            <person name="Lehmann R."/>
            <person name="Hamlin N."/>
            <person name="Davies R."/>
            <person name="Gaudet P."/>
            <person name="Fey P."/>
            <person name="Pilcher K."/>
            <person name="Chen G."/>
            <person name="Saunders D."/>
            <person name="Sodergren E.J."/>
            <person name="Davis P."/>
            <person name="Kerhornou A."/>
            <person name="Nie X."/>
            <person name="Hall N."/>
            <person name="Anjard C."/>
            <person name="Hemphill L."/>
            <person name="Bason N."/>
            <person name="Farbrother P."/>
            <person name="Desany B."/>
            <person name="Just E."/>
            <person name="Morio T."/>
            <person name="Rost R."/>
            <person name="Churcher C.M."/>
            <person name="Cooper J."/>
            <person name="Haydock S."/>
            <person name="van Driessche N."/>
            <person name="Cronin A."/>
            <person name="Goodhead I."/>
            <person name="Muzny D.M."/>
            <person name="Mourier T."/>
            <person name="Pain A."/>
            <person name="Lu M."/>
            <person name="Harper D."/>
            <person name="Lindsay R."/>
            <person name="Hauser H."/>
            <person name="James K.D."/>
            <person name="Quiles M."/>
            <person name="Madan Babu M."/>
            <person name="Saito T."/>
            <person name="Buchrieser C."/>
            <person name="Wardroper A."/>
            <person name="Felder M."/>
            <person name="Thangavelu M."/>
            <person name="Johnson D."/>
            <person name="Knights A."/>
            <person name="Loulseged H."/>
            <person name="Mungall K.L."/>
            <person name="Oliver K."/>
            <person name="Price C."/>
            <person name="Quail M.A."/>
            <person name="Urushihara H."/>
            <person name="Hernandez J."/>
            <person name="Rabbinowitsch E."/>
            <person name="Steffen D."/>
            <person name="Sanders M."/>
            <person name="Ma J."/>
            <person name="Kohara Y."/>
            <person name="Sharp S."/>
            <person name="Simmonds M.N."/>
            <person name="Spiegler S."/>
            <person name="Tivey A."/>
            <person name="Sugano S."/>
            <person name="White B."/>
            <person name="Walker D."/>
            <person name="Woodward J.R."/>
            <person name="Winckler T."/>
            <person name="Tanaka Y."/>
            <person name="Shaulsky G."/>
            <person name="Schleicher M."/>
            <person name="Weinstock G.M."/>
            <person name="Rosenthal A."/>
            <person name="Cox E.C."/>
            <person name="Chisholm R.L."/>
            <person name="Gibbs R.A."/>
            <person name="Loomis W.F."/>
            <person name="Platzer M."/>
            <person name="Kay R.R."/>
            <person name="Williams J.G."/>
            <person name="Dear P.H."/>
            <person name="Noegel A.A."/>
            <person name="Barrell B.G."/>
            <person name="Kuspa A."/>
        </authorList>
    </citation>
    <scope>NUCLEOTIDE SEQUENCE [LARGE SCALE GENOMIC DNA]</scope>
    <source>
        <strain>AX4</strain>
    </source>
</reference>
<reference key="2">
    <citation type="journal article" date="2008" name="BMC Microbiol.">
        <title>Structural and functional studies of a family of Dictyostelium discoideum developmentally regulated, prestalk genes coding for small proteins.</title>
        <authorList>
            <person name="Vicente J.J."/>
            <person name="Galardi-Castilla M."/>
            <person name="Escalante R."/>
            <person name="Sastre L."/>
        </authorList>
    </citation>
    <scope>IDENTIFICATION</scope>
</reference>
<dbReference type="EMBL" id="AAFI02000055">
    <property type="protein sequence ID" value="EAL65682.1"/>
    <property type="molecule type" value="Genomic_DNA"/>
</dbReference>
<dbReference type="RefSeq" id="XP_639032.1">
    <property type="nucleotide sequence ID" value="XM_633940.1"/>
</dbReference>
<dbReference type="PaxDb" id="44689-DDB0266579"/>
<dbReference type="EnsemblProtists" id="EAL65682">
    <property type="protein sequence ID" value="EAL65682"/>
    <property type="gene ID" value="DDB_G0283395"/>
</dbReference>
<dbReference type="GeneID" id="8624057"/>
<dbReference type="KEGG" id="ddi:DDB_G0283395"/>
<dbReference type="dictyBase" id="DDB_G0283395"/>
<dbReference type="HOGENOM" id="CLU_2908772_0_0_1"/>
<dbReference type="InParanoid" id="Q54R59"/>
<dbReference type="PRO" id="PR:Q54R59"/>
<dbReference type="Proteomes" id="UP000002195">
    <property type="component" value="Chromosome 4"/>
</dbReference>
<protein>
    <recommendedName>
        <fullName>Protein sigN176</fullName>
    </recommendedName>
    <alternativeName>
        <fullName>SrfA-induced gene N-like protein 176</fullName>
    </alternativeName>
</protein>
<sequence length="62" mass="6581">MLFKSLQSISSVKSVSQKSQLTNTINSTQFGSNSNQLLAVAACIDLNLAPLLSAHIDAFISL</sequence>
<name>SI176_DICDI</name>
<feature type="chain" id="PRO_0000384454" description="Protein sigN176">
    <location>
        <begin position="1"/>
        <end position="62"/>
    </location>
</feature>
<keyword id="KW-1185">Reference proteome</keyword>